<gene>
    <name type="primary">rmuC</name>
    <name type="ordered locus">NMB2050</name>
</gene>
<dbReference type="EMBL" id="AE002098">
    <property type="protein sequence ID" value="AAF42370.1"/>
    <property type="molecule type" value="Genomic_DNA"/>
</dbReference>
<dbReference type="PIR" id="C81011">
    <property type="entry name" value="C81011"/>
</dbReference>
<dbReference type="RefSeq" id="NP_275040.1">
    <property type="nucleotide sequence ID" value="NC_003112.2"/>
</dbReference>
<dbReference type="RefSeq" id="WP_002225695.1">
    <property type="nucleotide sequence ID" value="NC_003112.2"/>
</dbReference>
<dbReference type="SMR" id="Q9JXH2"/>
<dbReference type="FunCoup" id="Q9JXH2">
    <property type="interactions" value="70"/>
</dbReference>
<dbReference type="STRING" id="122586.NMB2050"/>
<dbReference type="PaxDb" id="122586-NMB2050"/>
<dbReference type="KEGG" id="nme:NMB2050"/>
<dbReference type="PATRIC" id="fig|122586.8.peg.2627"/>
<dbReference type="HOGENOM" id="CLU_024057_0_0_4"/>
<dbReference type="InParanoid" id="Q9JXH2"/>
<dbReference type="OrthoDB" id="9765111at2"/>
<dbReference type="Proteomes" id="UP000000425">
    <property type="component" value="Chromosome"/>
</dbReference>
<dbReference type="GO" id="GO:0006310">
    <property type="term" value="P:DNA recombination"/>
    <property type="evidence" value="ECO:0000318"/>
    <property type="project" value="GO_Central"/>
</dbReference>
<dbReference type="InterPro" id="IPR003798">
    <property type="entry name" value="DNA_recombination_RmuC"/>
</dbReference>
<dbReference type="PANTHER" id="PTHR30563">
    <property type="entry name" value="DNA RECOMBINATION PROTEIN RMUC"/>
    <property type="match status" value="1"/>
</dbReference>
<dbReference type="PANTHER" id="PTHR30563:SF0">
    <property type="entry name" value="DNA RECOMBINATION PROTEIN RMUC"/>
    <property type="match status" value="1"/>
</dbReference>
<dbReference type="Pfam" id="PF02646">
    <property type="entry name" value="RmuC"/>
    <property type="match status" value="1"/>
</dbReference>
<evidence type="ECO:0000250" key="1"/>
<evidence type="ECO:0000255" key="2"/>
<evidence type="ECO:0000305" key="3"/>
<reference key="1">
    <citation type="journal article" date="2000" name="Science">
        <title>Complete genome sequence of Neisseria meningitidis serogroup B strain MC58.</title>
        <authorList>
            <person name="Tettelin H."/>
            <person name="Saunders N.J."/>
            <person name="Heidelberg J.F."/>
            <person name="Jeffries A.C."/>
            <person name="Nelson K.E."/>
            <person name="Eisen J.A."/>
            <person name="Ketchum K.A."/>
            <person name="Hood D.W."/>
            <person name="Peden J.F."/>
            <person name="Dodson R.J."/>
            <person name="Nelson W.C."/>
            <person name="Gwinn M.L."/>
            <person name="DeBoy R.T."/>
            <person name="Peterson J.D."/>
            <person name="Hickey E.K."/>
            <person name="Haft D.H."/>
            <person name="Salzberg S.L."/>
            <person name="White O."/>
            <person name="Fleischmann R.D."/>
            <person name="Dougherty B.A."/>
            <person name="Mason T.M."/>
            <person name="Ciecko A."/>
            <person name="Parksey D.S."/>
            <person name="Blair E."/>
            <person name="Cittone H."/>
            <person name="Clark E.B."/>
            <person name="Cotton M.D."/>
            <person name="Utterback T.R."/>
            <person name="Khouri H.M."/>
            <person name="Qin H."/>
            <person name="Vamathevan J.J."/>
            <person name="Gill J."/>
            <person name="Scarlato V."/>
            <person name="Masignani V."/>
            <person name="Pizza M."/>
            <person name="Grandi G."/>
            <person name="Sun L."/>
            <person name="Smith H.O."/>
            <person name="Fraser C.M."/>
            <person name="Moxon E.R."/>
            <person name="Rappuoli R."/>
            <person name="Venter J.C."/>
        </authorList>
    </citation>
    <scope>NUCLEOTIDE SEQUENCE [LARGE SCALE GENOMIC DNA]</scope>
    <source>
        <strain>ATCC BAA-335 / MC58</strain>
    </source>
</reference>
<keyword id="KW-0175">Coiled coil</keyword>
<keyword id="KW-0233">DNA recombination</keyword>
<keyword id="KW-1185">Reference proteome</keyword>
<comment type="function">
    <text evidence="1">Involved in DNA recombination.</text>
</comment>
<comment type="similarity">
    <text evidence="3">Belongs to the RmuC family.</text>
</comment>
<organism>
    <name type="scientific">Neisseria meningitidis serogroup B (strain ATCC BAA-335 / MC58)</name>
    <dbReference type="NCBI Taxonomy" id="122586"/>
    <lineage>
        <taxon>Bacteria</taxon>
        <taxon>Pseudomonadati</taxon>
        <taxon>Pseudomonadota</taxon>
        <taxon>Betaproteobacteria</taxon>
        <taxon>Neisseriales</taxon>
        <taxon>Neisseriaceae</taxon>
        <taxon>Neisseria</taxon>
    </lineage>
</organism>
<sequence length="594" mass="66655">MELMTVLLPLAALVSGVLFTWLLMKGRFQGEFAGLNAHLAEKAARCDFVEQAHGKTVSELAVLDGKYRHLQDENYALGNRFSAAEKQIAHLQEKEAESARLKQSYIELQEKAQGLAVENERLATQLGQERKAFADQYALERQIRQRIETDLEESRQTVRDVQNDLSDVGNRFAAAEKQIAHLQEKEAEAERLRQSHTELQEKAQGLAVENERLATQIEQERLASEEKLSLLGEARKSLSDQFQNLANTILEEKSRRFTEQNREQLHQVLNPLNERIHGFGELVKQTYDKESRERLTLENELKRLQGLNAQLHSEAKALTNALTGTQNKVQGNWGEMILETVLENSGLQKGREYVVQAASVRKEEDGGTRRLQPDVLVNLPDNKQIVIDSKVSLTAYVRYTQAADADTAARELAAHVASIRAHMKGLSLKDYTDLEGVNTLDFVFMFIPVEPAYLLALQNDAGLFQECFDKRIMLVGPSTLLATLRTVANIWRNEQQNQNALAIADEGGKLYDKFVGFVQTLESVGKGIDQAQSSFQTAFKQLAEGRGNLVGRAEKLRLLGVKAGKQLQRDLVERSNETTALSESLEYAAEDEAV</sequence>
<name>RMUC_NEIMB</name>
<feature type="chain" id="PRO_0000202046" description="DNA recombination protein RmuC homolog">
    <location>
        <begin position="1"/>
        <end position="594"/>
    </location>
</feature>
<feature type="coiled-coil region" evidence="2">
    <location>
        <begin position="66"/>
        <end position="330"/>
    </location>
</feature>
<accession>Q9JXH2</accession>
<protein>
    <recommendedName>
        <fullName>DNA recombination protein RmuC homolog</fullName>
    </recommendedName>
</protein>
<proteinExistence type="inferred from homology"/>